<comment type="function">
    <text evidence="2">With S4 and S5 plays an important role in translational accuracy.</text>
</comment>
<comment type="function">
    <text evidence="2">Interacts with and stabilizes bases of the 16S rRNA that are involved in tRNA selection in the A site and with the mRNA backbone. Located at the interface of the 30S and 50S subunits, it traverses the body of the 30S subunit contacting proteins on the other side and probably holding the rRNA structure together. The combined cluster of proteins S8, S12 and S17 appears to hold together the shoulder and platform of the 30S subunit.</text>
</comment>
<comment type="subunit">
    <text evidence="2">Part of the 30S ribosomal subunit. Contacts proteins S8 and S17. May interact with IF1 in the 30S initiation complex.</text>
</comment>
<comment type="similarity">
    <text evidence="2">Belongs to the universal ribosomal protein uS12 family.</text>
</comment>
<reference key="1">
    <citation type="submission" date="2009-07" db="EMBL/GenBank/DDBJ databases">
        <title>Complete sequence of Pectobacterium carotovorum subsp. carotovorum PC1.</title>
        <authorList>
            <consortium name="US DOE Joint Genome Institute"/>
            <person name="Lucas S."/>
            <person name="Copeland A."/>
            <person name="Lapidus A."/>
            <person name="Glavina del Rio T."/>
            <person name="Tice H."/>
            <person name="Bruce D."/>
            <person name="Goodwin L."/>
            <person name="Pitluck S."/>
            <person name="Munk A.C."/>
            <person name="Brettin T."/>
            <person name="Detter J.C."/>
            <person name="Han C."/>
            <person name="Tapia R."/>
            <person name="Larimer F."/>
            <person name="Land M."/>
            <person name="Hauser L."/>
            <person name="Kyrpides N."/>
            <person name="Mikhailova N."/>
            <person name="Balakrishnan V."/>
            <person name="Glasner J."/>
            <person name="Perna N.T."/>
        </authorList>
    </citation>
    <scope>NUCLEOTIDE SEQUENCE [LARGE SCALE GENOMIC DNA]</scope>
    <source>
        <strain>PC1</strain>
    </source>
</reference>
<name>RS12_PECCP</name>
<feature type="chain" id="PRO_1000205922" description="Small ribosomal subunit protein uS12">
    <location>
        <begin position="1"/>
        <end position="124"/>
    </location>
</feature>
<feature type="modified residue" description="3-methylthioaspartic acid" evidence="1">
    <location>
        <position position="89"/>
    </location>
</feature>
<proteinExistence type="inferred from homology"/>
<gene>
    <name evidence="2" type="primary">rpsL</name>
    <name type="ordered locus">PC1_3830</name>
</gene>
<sequence length="124" mass="13684">MATINQLVRKPRSLKAAKSNVPALEACPQKRGVCTRVYTTTPKKPNSALRKVCRVRLTNGFEVTSYIGGEGHNLQEHSVILIRGGRVKDLPGVRYHTVRGALDCSGVKDRKQSRSKYGVKKPKA</sequence>
<organism>
    <name type="scientific">Pectobacterium carotovorum subsp. carotovorum (strain PC1)</name>
    <dbReference type="NCBI Taxonomy" id="561230"/>
    <lineage>
        <taxon>Bacteria</taxon>
        <taxon>Pseudomonadati</taxon>
        <taxon>Pseudomonadota</taxon>
        <taxon>Gammaproteobacteria</taxon>
        <taxon>Enterobacterales</taxon>
        <taxon>Pectobacteriaceae</taxon>
        <taxon>Pectobacterium</taxon>
    </lineage>
</organism>
<accession>C6DG82</accession>
<dbReference type="EMBL" id="CP001657">
    <property type="protein sequence ID" value="ACT14845.1"/>
    <property type="molecule type" value="Genomic_DNA"/>
</dbReference>
<dbReference type="RefSeq" id="WP_005969567.1">
    <property type="nucleotide sequence ID" value="NC_012917.1"/>
</dbReference>
<dbReference type="SMR" id="C6DG82"/>
<dbReference type="STRING" id="561230.PC1_3830"/>
<dbReference type="GeneID" id="93391987"/>
<dbReference type="KEGG" id="pct:PC1_3830"/>
<dbReference type="eggNOG" id="COG0048">
    <property type="taxonomic scope" value="Bacteria"/>
</dbReference>
<dbReference type="HOGENOM" id="CLU_104295_1_2_6"/>
<dbReference type="OrthoDB" id="9802366at2"/>
<dbReference type="Proteomes" id="UP000002736">
    <property type="component" value="Chromosome"/>
</dbReference>
<dbReference type="GO" id="GO:0015935">
    <property type="term" value="C:small ribosomal subunit"/>
    <property type="evidence" value="ECO:0007669"/>
    <property type="project" value="InterPro"/>
</dbReference>
<dbReference type="GO" id="GO:0019843">
    <property type="term" value="F:rRNA binding"/>
    <property type="evidence" value="ECO:0007669"/>
    <property type="project" value="UniProtKB-UniRule"/>
</dbReference>
<dbReference type="GO" id="GO:0003735">
    <property type="term" value="F:structural constituent of ribosome"/>
    <property type="evidence" value="ECO:0007669"/>
    <property type="project" value="InterPro"/>
</dbReference>
<dbReference type="GO" id="GO:0000049">
    <property type="term" value="F:tRNA binding"/>
    <property type="evidence" value="ECO:0007669"/>
    <property type="project" value="UniProtKB-UniRule"/>
</dbReference>
<dbReference type="GO" id="GO:0006412">
    <property type="term" value="P:translation"/>
    <property type="evidence" value="ECO:0007669"/>
    <property type="project" value="UniProtKB-UniRule"/>
</dbReference>
<dbReference type="CDD" id="cd03368">
    <property type="entry name" value="Ribosomal_S12"/>
    <property type="match status" value="1"/>
</dbReference>
<dbReference type="FunFam" id="2.40.50.140:FF:000001">
    <property type="entry name" value="30S ribosomal protein S12"/>
    <property type="match status" value="1"/>
</dbReference>
<dbReference type="Gene3D" id="2.40.50.140">
    <property type="entry name" value="Nucleic acid-binding proteins"/>
    <property type="match status" value="1"/>
</dbReference>
<dbReference type="HAMAP" id="MF_00403_B">
    <property type="entry name" value="Ribosomal_uS12_B"/>
    <property type="match status" value="1"/>
</dbReference>
<dbReference type="InterPro" id="IPR012340">
    <property type="entry name" value="NA-bd_OB-fold"/>
</dbReference>
<dbReference type="InterPro" id="IPR006032">
    <property type="entry name" value="Ribosomal_uS12"/>
</dbReference>
<dbReference type="InterPro" id="IPR005679">
    <property type="entry name" value="Ribosomal_uS12_bac"/>
</dbReference>
<dbReference type="NCBIfam" id="TIGR00981">
    <property type="entry name" value="rpsL_bact"/>
    <property type="match status" value="1"/>
</dbReference>
<dbReference type="PANTHER" id="PTHR11652">
    <property type="entry name" value="30S RIBOSOMAL PROTEIN S12 FAMILY MEMBER"/>
    <property type="match status" value="1"/>
</dbReference>
<dbReference type="Pfam" id="PF00164">
    <property type="entry name" value="Ribosom_S12_S23"/>
    <property type="match status" value="1"/>
</dbReference>
<dbReference type="PIRSF" id="PIRSF002133">
    <property type="entry name" value="Ribosomal_S12/S23"/>
    <property type="match status" value="1"/>
</dbReference>
<dbReference type="PRINTS" id="PR01034">
    <property type="entry name" value="RIBOSOMALS12"/>
</dbReference>
<dbReference type="SUPFAM" id="SSF50249">
    <property type="entry name" value="Nucleic acid-binding proteins"/>
    <property type="match status" value="1"/>
</dbReference>
<dbReference type="PROSITE" id="PS00055">
    <property type="entry name" value="RIBOSOMAL_S12"/>
    <property type="match status" value="1"/>
</dbReference>
<protein>
    <recommendedName>
        <fullName evidence="2">Small ribosomal subunit protein uS12</fullName>
    </recommendedName>
    <alternativeName>
        <fullName evidence="3">30S ribosomal protein S12</fullName>
    </alternativeName>
</protein>
<evidence type="ECO:0000250" key="1"/>
<evidence type="ECO:0000255" key="2">
    <source>
        <dbReference type="HAMAP-Rule" id="MF_00403"/>
    </source>
</evidence>
<evidence type="ECO:0000305" key="3"/>
<keyword id="KW-0488">Methylation</keyword>
<keyword id="KW-0687">Ribonucleoprotein</keyword>
<keyword id="KW-0689">Ribosomal protein</keyword>
<keyword id="KW-0694">RNA-binding</keyword>
<keyword id="KW-0699">rRNA-binding</keyword>
<keyword id="KW-0820">tRNA-binding</keyword>